<name>DPOL_HBVF3</name>
<proteinExistence type="inferred from homology"/>
<dbReference type="EC" id="2.7.7.7" evidence="1"/>
<dbReference type="EC" id="2.7.7.49" evidence="1"/>
<dbReference type="EC" id="3.1.26.4" evidence="1"/>
<dbReference type="EMBL" id="AF223963">
    <property type="protein sequence ID" value="AAG49719.1"/>
    <property type="molecule type" value="Genomic_DNA"/>
</dbReference>
<dbReference type="Proteomes" id="UP000001180">
    <property type="component" value="Genome"/>
</dbReference>
<dbReference type="GO" id="GO:0003677">
    <property type="term" value="F:DNA binding"/>
    <property type="evidence" value="ECO:0007669"/>
    <property type="project" value="UniProtKB-UniRule"/>
</dbReference>
<dbReference type="GO" id="GO:0003887">
    <property type="term" value="F:DNA-directed DNA polymerase activity"/>
    <property type="evidence" value="ECO:0007669"/>
    <property type="project" value="UniProtKB-UniRule"/>
</dbReference>
<dbReference type="GO" id="GO:0046872">
    <property type="term" value="F:metal ion binding"/>
    <property type="evidence" value="ECO:0007669"/>
    <property type="project" value="UniProtKB-UniRule"/>
</dbReference>
<dbReference type="GO" id="GO:0003964">
    <property type="term" value="F:RNA-directed DNA polymerase activity"/>
    <property type="evidence" value="ECO:0007669"/>
    <property type="project" value="UniProtKB-UniRule"/>
</dbReference>
<dbReference type="GO" id="GO:0004523">
    <property type="term" value="F:RNA-DNA hybrid ribonuclease activity"/>
    <property type="evidence" value="ECO:0007669"/>
    <property type="project" value="UniProtKB-UniRule"/>
</dbReference>
<dbReference type="GO" id="GO:0006260">
    <property type="term" value="P:DNA replication"/>
    <property type="evidence" value="ECO:0007669"/>
    <property type="project" value="UniProtKB-UniRule"/>
</dbReference>
<dbReference type="GO" id="GO:0052170">
    <property type="term" value="P:symbiont-mediated suppression of host innate immune response"/>
    <property type="evidence" value="ECO:0007669"/>
    <property type="project" value="UniProtKB-UniRule"/>
</dbReference>
<dbReference type="FunFam" id="3.30.70.270:FF:000009">
    <property type="entry name" value="Protein P"/>
    <property type="match status" value="1"/>
</dbReference>
<dbReference type="Gene3D" id="3.30.70.270">
    <property type="match status" value="1"/>
</dbReference>
<dbReference type="HAMAP" id="MF_04073">
    <property type="entry name" value="HBV_DPOL"/>
    <property type="match status" value="1"/>
</dbReference>
<dbReference type="InterPro" id="IPR043502">
    <property type="entry name" value="DNA/RNA_pol_sf"/>
</dbReference>
<dbReference type="InterPro" id="IPR001462">
    <property type="entry name" value="DNApol_viral_C"/>
</dbReference>
<dbReference type="InterPro" id="IPR000201">
    <property type="entry name" value="DNApol_viral_N"/>
</dbReference>
<dbReference type="InterPro" id="IPR037531">
    <property type="entry name" value="HBV_DPOL"/>
</dbReference>
<dbReference type="InterPro" id="IPR043128">
    <property type="entry name" value="Rev_trsase/Diguanyl_cyclase"/>
</dbReference>
<dbReference type="InterPro" id="IPR000477">
    <property type="entry name" value="RT_dom"/>
</dbReference>
<dbReference type="InterPro" id="IPR051320">
    <property type="entry name" value="Viral_Replic_Matur_Polypro"/>
</dbReference>
<dbReference type="PANTHER" id="PTHR33064:SF29">
    <property type="entry name" value="PEPTIDASE A2 DOMAIN-CONTAINING PROTEIN-RELATED"/>
    <property type="match status" value="1"/>
</dbReference>
<dbReference type="PANTHER" id="PTHR33064">
    <property type="entry name" value="POL PROTEIN"/>
    <property type="match status" value="1"/>
</dbReference>
<dbReference type="Pfam" id="PF00336">
    <property type="entry name" value="DNA_pol_viral_C"/>
    <property type="match status" value="1"/>
</dbReference>
<dbReference type="Pfam" id="PF00242">
    <property type="entry name" value="DNA_pol_viral_N"/>
    <property type="match status" value="1"/>
</dbReference>
<dbReference type="Pfam" id="PF00078">
    <property type="entry name" value="RVT_1"/>
    <property type="match status" value="1"/>
</dbReference>
<dbReference type="SUPFAM" id="SSF56672">
    <property type="entry name" value="DNA/RNA polymerases"/>
    <property type="match status" value="1"/>
</dbReference>
<dbReference type="PROSITE" id="PS50878">
    <property type="entry name" value="RT_POL"/>
    <property type="match status" value="1"/>
</dbReference>
<gene>
    <name evidence="1" type="primary">P</name>
</gene>
<comment type="function">
    <text evidence="1">Multifunctional enzyme that converts the viral RNA genome into dsDNA in viral cytoplasmic capsids. This enzyme displays a DNA polymerase activity that can copy either DNA or RNA templates, and a ribonuclease H (RNase H) activity that cleaves the RNA strand of RNA-DNA heteroduplexes in a partially processive 3'- to 5'-endonucleasic mode. Neo-synthesized pregenomic RNA (pgRNA) are encapsidated together with the P protein, and reverse-transcribed inside the nucleocapsid. Initiation of reverse-transcription occurs first by binding the epsilon loop on the pgRNA genome, and is initiated by protein priming, thereby the 5'-end of (-)DNA is covalently linked to P protein. Partial (+)DNA is synthesized from the (-)DNA template and generates the relaxed circular DNA (RC-DNA) genome. After budding and infection, the RC-DNA migrates in the nucleus, and is converted into a plasmid-like covalently closed circular DNA (cccDNA). The activity of P protein does not seem to be necessary for cccDNA generation, and is presumably released from (+)DNA by host nuclear DNA repair machinery.</text>
</comment>
<comment type="catalytic activity">
    <reaction evidence="1">
        <text>DNA(n) + a 2'-deoxyribonucleoside 5'-triphosphate = DNA(n+1) + diphosphate</text>
        <dbReference type="Rhea" id="RHEA:22508"/>
        <dbReference type="Rhea" id="RHEA-COMP:17339"/>
        <dbReference type="Rhea" id="RHEA-COMP:17340"/>
        <dbReference type="ChEBI" id="CHEBI:33019"/>
        <dbReference type="ChEBI" id="CHEBI:61560"/>
        <dbReference type="ChEBI" id="CHEBI:173112"/>
        <dbReference type="EC" id="2.7.7.7"/>
    </reaction>
</comment>
<comment type="catalytic activity">
    <reaction evidence="1">
        <text>DNA(n) + a 2'-deoxyribonucleoside 5'-triphosphate = DNA(n+1) + diphosphate</text>
        <dbReference type="Rhea" id="RHEA:22508"/>
        <dbReference type="Rhea" id="RHEA-COMP:17339"/>
        <dbReference type="Rhea" id="RHEA-COMP:17340"/>
        <dbReference type="ChEBI" id="CHEBI:33019"/>
        <dbReference type="ChEBI" id="CHEBI:61560"/>
        <dbReference type="ChEBI" id="CHEBI:173112"/>
        <dbReference type="EC" id="2.7.7.49"/>
    </reaction>
</comment>
<comment type="catalytic activity">
    <reaction evidence="1">
        <text>Endonucleolytic cleavage to 5'-phosphomonoester.</text>
        <dbReference type="EC" id="3.1.26.4"/>
    </reaction>
</comment>
<comment type="activity regulation">
    <text evidence="1">Activated by host HSP70 and HSP40 in vitro to be able to bind the epsilon loop of the pgRNA. Because deletion of the RNase H region renders the protein partly chaperone-independent, the chaperones may be needed indirectly to relieve occlusion of the RNA-binding site by this domain. Inhibited by several reverse-transcriptase inhibitors: Lamivudine, Adefovir and Entecavir.</text>
</comment>
<comment type="domain">
    <text evidence="1">Terminal protein domain (TP) is hepadnavirus-specific. Spacer domain is highly variable and separates the TP and RT domains. Polymerase/reverse-transcriptase domain (RT) and ribonuclease H domain (RH) are similar to retrovirus reverse transcriptase/RNase H.</text>
</comment>
<comment type="domain">
    <text evidence="1">The polymerase/reverse transcriptase (RT) and ribonuclease H (RH) domains are structured in five subdomains: finger, palm, thumb, connection and RNase H. Within the palm subdomain, the 'primer grip' region is thought to be involved in the positioning of the primer terminus for accommodating the incoming nucleotide. The RH domain stabilizes the association of RT with primer-template.</text>
</comment>
<comment type="miscellaneous">
    <text evidence="1">Hepadnaviral virions contain probably just one P protein molecule per particle.</text>
</comment>
<comment type="similarity">
    <text evidence="1">Belongs to the hepadnaviridae P protein family.</text>
</comment>
<accession>Q99HS4</accession>
<evidence type="ECO:0000255" key="1">
    <source>
        <dbReference type="HAMAP-Rule" id="MF_04073"/>
    </source>
</evidence>
<evidence type="ECO:0000256" key="2">
    <source>
        <dbReference type="SAM" id="MobiDB-lite"/>
    </source>
</evidence>
<organism>
    <name type="scientific">Hepatitis B virus genotype F1 (isolate Argentina/sa11/2000)</name>
    <name type="common">HBV-F</name>
    <dbReference type="NCBI Taxonomy" id="489500"/>
    <lineage>
        <taxon>Viruses</taxon>
        <taxon>Riboviria</taxon>
        <taxon>Pararnavirae</taxon>
        <taxon>Artverviricota</taxon>
        <taxon>Revtraviricetes</taxon>
        <taxon>Blubervirales</taxon>
        <taxon>Hepadnaviridae</taxon>
        <taxon>Orthohepadnavirus</taxon>
        <taxon>Hepatitis B virus</taxon>
        <taxon>hepatitis B virus genotype F</taxon>
    </lineage>
</organism>
<keyword id="KW-0235">DNA replication</keyword>
<keyword id="KW-0238">DNA-binding</keyword>
<keyword id="KW-0239">DNA-directed DNA polymerase</keyword>
<keyword id="KW-0255">Endonuclease</keyword>
<keyword id="KW-0945">Host-virus interaction</keyword>
<keyword id="KW-0378">Hydrolase</keyword>
<keyword id="KW-1090">Inhibition of host innate immune response by virus</keyword>
<keyword id="KW-1113">Inhibition of host RLR pathway by virus</keyword>
<keyword id="KW-0460">Magnesium</keyword>
<keyword id="KW-0479">Metal-binding</keyword>
<keyword id="KW-0511">Multifunctional enzyme</keyword>
<keyword id="KW-0540">Nuclease</keyword>
<keyword id="KW-0548">Nucleotidyltransferase</keyword>
<keyword id="KW-0695">RNA-directed DNA polymerase</keyword>
<keyword id="KW-0808">Transferase</keyword>
<keyword id="KW-0899">Viral immunoevasion</keyword>
<sequence length="843" mass="94322">MPLSYPHFRKLLLLDDEAGPLEEELPRLADEGLNRRVAEDLNLQLPNVSIPWTHKVGNFTGLYSSTVPTFNPDWLTPSFPDIHLHQDLIHKCEQFVGPLTKNELRRLKLVMPSRFFPKVTKYFPMEKGIKPYYPDNVVNHYFKTRHYLHTLWKAGILYKRESTRSASFCGSPYSWEQELQHGSTSINDSKGHGTESLCTQSSGILSRPSAGSSIQGKFQQSRLGLQQKQGQLANGKQGRSGRIRSWVHTPTRWPVGVESTGTGCAYNIASRSASCFHQSAVREKTNPSLSTSKRHSSTGHAVELHSVPPGSVRSEGKGSVFSCWWLQFRDTEPCSDYCLSHIINLLEDWGPCYEHGQHHIRTPRTPARVTGGVFLVDKNPHNTTESRLVVDFSQFSRGNTRVSWPKFAVPNLQSLTNLLSSNLSWLSLDVSAAFYHLPLHPAAMPHLLVGSCGLSRYVARLSSTSRIHDHQHGTMQNLHNSCSRNLYVSLLLLFQTLGRKLHLYSHPIILGFRKIPMGVGLSPFLLAQFTSAICSVVRRAFPHCLAFSYMDDLVLGAKSVQHLESLYTAVTNFLLSVGIHLNTSKTKRWGYTLNFMGYVIGSWGSLPQDHIVQKLKDCFRKLPVNRPIDWKVCQRIVGLLGFAAPFTQCGYPALMPLYACITAKQAFVFSPTYKAFLCQQYMNLYPVARQRPGLCQVFADATPTGWGLAIGHQRMRGTFVAPLPIHTAELLAACFARSRSGAKLIGTDNSVVLSRKYTSFPWLLGCAANWILRGTSFVYVPSALNPADDPSRGRLGLYRPLLRLPFQPTTGRTSLYAASPSVPSHLPDRVHFASPLHVAWRPP</sequence>
<protein>
    <recommendedName>
        <fullName evidence="1">Protein P</fullName>
    </recommendedName>
    <domain>
        <recommendedName>
            <fullName evidence="1">DNA-directed DNA polymerase</fullName>
            <ecNumber evidence="1">2.7.7.7</ecNumber>
        </recommendedName>
    </domain>
    <domain>
        <recommendedName>
            <fullName evidence="1">RNA-directed DNA polymerase</fullName>
            <ecNumber evidence="1">2.7.7.49</ecNumber>
        </recommendedName>
    </domain>
    <domain>
        <recommendedName>
            <fullName evidence="1">Ribonuclease H</fullName>
            <ecNumber evidence="1">3.1.26.4</ecNumber>
        </recommendedName>
    </domain>
</protein>
<feature type="chain" id="PRO_0000323275" description="Protein P">
    <location>
        <begin position="1"/>
        <end position="843"/>
    </location>
</feature>
<feature type="domain" description="Reverse transcriptase" evidence="1">
    <location>
        <begin position="357"/>
        <end position="600"/>
    </location>
</feature>
<feature type="region of interest" description="Terminal protein domain (TP)" evidence="1">
    <location>
        <begin position="1"/>
        <end position="177"/>
    </location>
</feature>
<feature type="region of interest" description="Spacer" evidence="1">
    <location>
        <begin position="178"/>
        <end position="346"/>
    </location>
</feature>
<feature type="region of interest" description="Disordered" evidence="2">
    <location>
        <begin position="202"/>
        <end position="221"/>
    </location>
</feature>
<feature type="region of interest" description="Disordered" evidence="2">
    <location>
        <begin position="285"/>
        <end position="310"/>
    </location>
</feature>
<feature type="region of interest" description="Polymerase/reverse transcriptase domain (RT)" evidence="1">
    <location>
        <begin position="347"/>
        <end position="690"/>
    </location>
</feature>
<feature type="binding site" evidence="1">
    <location>
        <position position="429"/>
    </location>
    <ligand>
        <name>Mg(2+)</name>
        <dbReference type="ChEBI" id="CHEBI:18420"/>
        <note>catalytic</note>
    </ligand>
</feature>
<feature type="binding site" evidence="1">
    <location>
        <position position="551"/>
    </location>
    <ligand>
        <name>Mg(2+)</name>
        <dbReference type="ChEBI" id="CHEBI:18420"/>
        <note>catalytic</note>
    </ligand>
</feature>
<feature type="binding site" evidence="1">
    <location>
        <position position="552"/>
    </location>
    <ligand>
        <name>Mg(2+)</name>
        <dbReference type="ChEBI" id="CHEBI:18420"/>
        <note>catalytic</note>
    </ligand>
</feature>
<feature type="site" description="Priming of reverse-transcription by covalently linking the first nucleotide of the (-)DNA" evidence="1">
    <location>
        <position position="63"/>
    </location>
</feature>
<organismHost>
    <name type="scientific">Homo sapiens</name>
    <name type="common">Human</name>
    <dbReference type="NCBI Taxonomy" id="9606"/>
</organismHost>
<organismHost>
    <name type="scientific">Pan troglodytes</name>
    <name type="common">Chimpanzee</name>
    <dbReference type="NCBI Taxonomy" id="9598"/>
</organismHost>
<reference key="1">
    <citation type="submission" date="2000-01" db="EMBL/GenBank/DDBJ databases">
        <title>Phylogenetic analysis of Hepatitis B virus strains with precore C-1858 variant.</title>
        <authorList>
            <person name="Alestig E."/>
            <person name="Hannoun C."/>
            <person name="Horal P."/>
            <person name="Lindh M."/>
        </authorList>
    </citation>
    <scope>NUCLEOTIDE SEQUENCE [GENOMIC DNA]</scope>
</reference>
<reference key="2">
    <citation type="journal article" date="2007" name="World J. Gastroenterol.">
        <title>Hepatitis B virus replication.</title>
        <authorList>
            <person name="Beck J."/>
            <person name="Nassal M."/>
        </authorList>
    </citation>
    <scope>REVIEW</scope>
</reference>